<sequence>MADTKAKLTLNGDTAVELDVLKGTLGQDVIDIRTLGSKGVFTFDPGFTSTASCESKITFIDGDEGILLHRGFPIDQLATDSNYLEVCYILLNGEKPTQEQYDEFKTTVTRHTMIHEQITRLFHAFRRDSHPMAVMCGITGALAAFYHDSLDVNNPRHREIAAFRLLSKMPTMAAMCYKYSIGQPFVYPRNDLSYAGNFLNMMFSTPCEPYEVNPILERAMDRILILHADHEQNASTSTVRTAGSSGANPFACIAAGIASLWGPAHGGANEAALKMLEEISSVKHIPEFVRRAKDKNDSFRLMGFGHRVYKNYDPRATVMRETCHEVLKELGTKDDLLEVAMELENIALNDPYFIEKKLYPNVDFYSGIILKAMGIPSSMFTVIFAMARTVGWIAHWSEMHSDGMKIARPRQLYTGYEKRDFKSDIKR</sequence>
<comment type="catalytic activity">
    <reaction evidence="1">
        <text>oxaloacetate + acetyl-CoA + H2O = citrate + CoA + H(+)</text>
        <dbReference type="Rhea" id="RHEA:16845"/>
        <dbReference type="ChEBI" id="CHEBI:15377"/>
        <dbReference type="ChEBI" id="CHEBI:15378"/>
        <dbReference type="ChEBI" id="CHEBI:16452"/>
        <dbReference type="ChEBI" id="CHEBI:16947"/>
        <dbReference type="ChEBI" id="CHEBI:57287"/>
        <dbReference type="ChEBI" id="CHEBI:57288"/>
        <dbReference type="EC" id="2.3.3.16"/>
    </reaction>
</comment>
<comment type="activity regulation">
    <text>Allosterically inhibited by NADH.</text>
</comment>
<comment type="pathway">
    <text>Carbohydrate metabolism; tricarboxylic acid cycle; isocitrate from oxaloacetate: step 1/2.</text>
</comment>
<comment type="subunit">
    <text>Homohexamer.</text>
</comment>
<comment type="interaction">
    <interactant intactId="EBI-547808">
        <id>P0ABH7</id>
    </interactant>
    <interactant intactId="EBI-547808">
        <id>P0ABH7</id>
        <label>gltA</label>
    </interactant>
    <organismsDiffer>false</organismsDiffer>
    <experiments>5</experiments>
</comment>
<comment type="interaction">
    <interactant intactId="EBI-547808">
        <id>P0ABH7</id>
    </interactant>
    <interactant intactId="EBI-1127478">
        <id>P76407</id>
        <label>yegS</label>
    </interactant>
    <organismsDiffer>false</organismsDiffer>
    <experiments>3</experiments>
</comment>
<comment type="miscellaneous">
    <text>Citrate synthase is found in nearly all cells capable of oxidative metabolism.</text>
</comment>
<comment type="similarity">
    <text evidence="4">Belongs to the citrate synthase family.</text>
</comment>
<accession>P0ABH7</accession>
<accession>O32552</accession>
<accession>P00891</accession>
<accession>P78257</accession>
<protein>
    <recommendedName>
        <fullName>Citrate synthase</fullName>
        <ecNumber>2.3.3.16</ecNumber>
    </recommendedName>
</protein>
<name>CISY_ECOLI</name>
<gene>
    <name type="primary">gltA</name>
    <name type="synonym">gluT</name>
    <name type="synonym">icdB</name>
    <name type="ordered locus">b0720</name>
    <name type="ordered locus">JW0710</name>
</gene>
<reference key="1">
    <citation type="journal article" date="1983" name="Biochemistry">
        <title>Complete sequence of the gltA gene encoding citrate synthase in Escherichia coli.</title>
        <authorList>
            <person name="Ner S.S."/>
            <person name="Bhayana V."/>
            <person name="Bell A.W."/>
            <person name="Giles I.G."/>
            <person name="Duckworth H.W."/>
            <person name="Bloxham D.P."/>
        </authorList>
    </citation>
    <scope>NUCLEOTIDE SEQUENCE [GENOMIC DNA]</scope>
    <source>
        <strain>K12</strain>
    </source>
</reference>
<reference key="2">
    <citation type="journal article" date="1996" name="DNA Res.">
        <title>A 718-kb DNA sequence of the Escherichia coli K-12 genome corresponding to the 12.7-28.0 min region on the linkage map.</title>
        <authorList>
            <person name="Oshima T."/>
            <person name="Aiba H."/>
            <person name="Baba T."/>
            <person name="Fujita K."/>
            <person name="Hayashi K."/>
            <person name="Honjo A."/>
            <person name="Ikemoto K."/>
            <person name="Inada T."/>
            <person name="Itoh T."/>
            <person name="Kajihara M."/>
            <person name="Kanai K."/>
            <person name="Kashimoto K."/>
            <person name="Kimura S."/>
            <person name="Kitagawa M."/>
            <person name="Makino K."/>
            <person name="Masuda S."/>
            <person name="Miki T."/>
            <person name="Mizobuchi K."/>
            <person name="Mori H."/>
            <person name="Motomura K."/>
            <person name="Nakamura Y."/>
            <person name="Nashimoto H."/>
            <person name="Nishio Y."/>
            <person name="Saito N."/>
            <person name="Sampei G."/>
            <person name="Seki Y."/>
            <person name="Tagami H."/>
            <person name="Takemoto K."/>
            <person name="Wada C."/>
            <person name="Yamamoto Y."/>
            <person name="Yano M."/>
            <person name="Horiuchi T."/>
        </authorList>
    </citation>
    <scope>NUCLEOTIDE SEQUENCE [LARGE SCALE GENOMIC DNA]</scope>
    <source>
        <strain>K12 / W3110 / ATCC 27325 / DSM 5911</strain>
    </source>
</reference>
<reference key="3">
    <citation type="journal article" date="1997" name="Science">
        <title>The complete genome sequence of Escherichia coli K-12.</title>
        <authorList>
            <person name="Blattner F.R."/>
            <person name="Plunkett G. III"/>
            <person name="Bloch C.A."/>
            <person name="Perna N.T."/>
            <person name="Burland V."/>
            <person name="Riley M."/>
            <person name="Collado-Vides J."/>
            <person name="Glasner J.D."/>
            <person name="Rode C.K."/>
            <person name="Mayhew G.F."/>
            <person name="Gregor J."/>
            <person name="Davis N.W."/>
            <person name="Kirkpatrick H.A."/>
            <person name="Goeden M.A."/>
            <person name="Rose D.J."/>
            <person name="Mau B."/>
            <person name="Shao Y."/>
        </authorList>
    </citation>
    <scope>NUCLEOTIDE SEQUENCE [LARGE SCALE GENOMIC DNA]</scope>
    <source>
        <strain>K12 / MG1655 / ATCC 47076</strain>
    </source>
</reference>
<reference key="4">
    <citation type="journal article" date="2006" name="Mol. Syst. Biol.">
        <title>Highly accurate genome sequences of Escherichia coli K-12 strains MG1655 and W3110.</title>
        <authorList>
            <person name="Hayashi K."/>
            <person name="Morooka N."/>
            <person name="Yamamoto Y."/>
            <person name="Fujita K."/>
            <person name="Isono K."/>
            <person name="Choi S."/>
            <person name="Ohtsubo E."/>
            <person name="Baba T."/>
            <person name="Wanner B.L."/>
            <person name="Mori H."/>
            <person name="Horiuchi T."/>
        </authorList>
    </citation>
    <scope>NUCLEOTIDE SEQUENCE [LARGE SCALE GENOMIC DNA]</scope>
    <source>
        <strain>K12 / W3110 / ATCC 27325 / DSM 5911</strain>
    </source>
</reference>
<reference key="5">
    <citation type="journal article" date="1984" name="Biochem. J.">
        <title>Nucleotide sequence encoding the flavoprotein and hydrophobic subunits of the succinate dehydrogenase of Escherichia coli.</title>
        <authorList>
            <person name="Wood D."/>
            <person name="Darlison M.G."/>
            <person name="Wilde R.J."/>
            <person name="Guest J.R."/>
        </authorList>
    </citation>
    <scope>NUCLEOTIDE SEQUENCE [GENOMIC DNA] OF 1-127</scope>
</reference>
<reference key="6">
    <citation type="journal article" date="1984" name="Biochemistry">
        <title>Amino acid sequence of Escherichia coli citrate synthase.</title>
        <authorList>
            <person name="Bhayana V."/>
            <person name="Duckworth H.W."/>
        </authorList>
    </citation>
    <scope>PROTEIN SEQUENCE OF 1-101; 110-217 AND 220-427</scope>
</reference>
<reference key="7">
    <citation type="journal article" date="1983" name="FEBS Lett.">
        <title>Nucleotide sequence of the promoter region of the citrate synthase gene (gltA) of Escherichia coli.</title>
        <authorList>
            <person name="Hull E.P."/>
            <person name="Spencer M.E."/>
            <person name="Wood D."/>
            <person name="Guest J.R."/>
        </authorList>
    </citation>
    <scope>NUCLEOTIDE SEQUENCE [GENOMIC DNA] OF 1-98</scope>
    <source>
        <strain>K12</strain>
    </source>
</reference>
<reference key="8">
    <citation type="submission" date="1984-08" db="EMBL/GenBank/DDBJ databases">
        <authorList>
            <person name="Guest J.R."/>
        </authorList>
    </citation>
    <scope>SEQUENCE REVISION TO 92-94</scope>
</reference>
<reference key="9">
    <citation type="journal article" date="1986" name="J. Gen. Microbiol.">
        <title>Transcript analysis of the citrate synthase and succinate dehydrogenase genes of Escherichia coli K12.</title>
        <authorList>
            <person name="Wilde R.J."/>
            <person name="Guest J.R."/>
        </authorList>
    </citation>
    <scope>NUCLEOTIDE SEQUENCE [GENOMIC DNA] OF 1-33</scope>
    <source>
        <strain>K12</strain>
    </source>
</reference>
<reference key="10">
    <citation type="journal article" date="1986" name="Int. J. Biochem.">
        <title>The synthesis and use of oligodeoxynucleotides in plasmid DNA sequencing.</title>
        <authorList>
            <person name="Ner S.S."/>
            <person name="Bloxham D.P."/>
            <person name="Handford P.A."/>
            <person name="Akhtar M."/>
        </authorList>
    </citation>
    <scope>NUCLEOTIDE SEQUENCE [GENOMIC DNA] OF 360-388</scope>
</reference>
<reference key="11">
    <citation type="journal article" date="1991" name="J. Biol. Chem.">
        <title>The role of cysteine 206 in allosteric inhibition of Escherichia coli citrate synthase. Studies by chemical modification, site-directed mutagenesis, and 19F NMR.</title>
        <authorList>
            <person name="Donald L.J."/>
            <person name="Crane B.R."/>
            <person name="Anderson D.H."/>
            <person name="Duckworth H.W."/>
        </authorList>
    </citation>
    <scope>MUTAGENESIS OF CYS-207 AND GLU-208</scope>
    <source>
        <strain>ATCC 33694 / HB101</strain>
    </source>
</reference>
<reference key="12">
    <citation type="journal article" date="1995" name="J. Bacteriol.">
        <title>icdB mutants of Escherichia coli.</title>
        <authorList>
            <person name="Helling R.B."/>
        </authorList>
    </citation>
    <scope>IDENTIFICATION OF ICDB AS GLTA</scope>
</reference>
<reference key="13">
    <citation type="journal article" date="1997" name="Electrophoresis">
        <title>Escherichia coli proteome analysis using the gene-protein database.</title>
        <authorList>
            <person name="VanBogelen R.A."/>
            <person name="Abshire K.Z."/>
            <person name="Moldover B."/>
            <person name="Olson E.R."/>
            <person name="Neidhardt F.C."/>
        </authorList>
    </citation>
    <scope>IDENTIFICATION BY 2D-GEL</scope>
</reference>
<reference key="14">
    <citation type="journal article" date="2009" name="Mol. Cell. Proteomics">
        <title>Lysine acetylation is a highly abundant and evolutionarily conserved modification in Escherichia coli.</title>
        <authorList>
            <person name="Zhang J."/>
            <person name="Sprung R."/>
            <person name="Pei J."/>
            <person name="Tan X."/>
            <person name="Kim S."/>
            <person name="Zhu H."/>
            <person name="Liu C.F."/>
            <person name="Grishin N.V."/>
            <person name="Zhao Y."/>
        </authorList>
    </citation>
    <scope>ACETYLATION [LARGE SCALE ANALYSIS] AT LYS-283</scope>
    <scope>IDENTIFICATION BY MASS SPECTROMETRY</scope>
    <source>
        <strain>K12 / JW1106</strain>
        <strain>K12 / MG1655 / ATCC 47076</strain>
    </source>
</reference>
<feature type="chain" id="PRO_0000169943" description="Citrate synthase">
    <location>
        <begin position="1"/>
        <end position="427"/>
    </location>
</feature>
<feature type="active site" evidence="1">
    <location>
        <position position="306"/>
    </location>
</feature>
<feature type="active site" evidence="1">
    <location>
        <position position="363"/>
    </location>
</feature>
<feature type="modified residue" description="N6-acetyllysine" evidence="2">
    <location>
        <position position="283"/>
    </location>
</feature>
<feature type="mutagenesis site" description="Weakened NADH binding and inhibition." evidence="3">
    <original>C</original>
    <variation>S</variation>
    <location>
        <position position="207"/>
    </location>
</feature>
<feature type="mutagenesis site" description="Weakened NADH binding and inhibition." evidence="3">
    <original>E</original>
    <variation>A</variation>
    <location>
        <position position="208"/>
    </location>
</feature>
<feature type="sequence conflict" description="In Ref. 6; AA sequence." evidence="4" ref="6">
    <original>N</original>
    <variation>D</variation>
    <location>
        <position position="11"/>
    </location>
</feature>
<feature type="sequence conflict" description="In Ref. 1; AAA23892 and 6; AA sequence." evidence="4" ref="1 6">
    <original>V</original>
    <variation>F</variation>
    <location>
        <position position="289"/>
    </location>
</feature>
<feature type="helix" evidence="7">
    <location>
        <begin position="3"/>
        <end position="6"/>
    </location>
</feature>
<feature type="strand" evidence="7">
    <location>
        <begin position="8"/>
        <end position="18"/>
    </location>
</feature>
<feature type="strand" evidence="7">
    <location>
        <begin position="24"/>
        <end position="26"/>
    </location>
</feature>
<feature type="strand" evidence="7">
    <location>
        <begin position="29"/>
        <end position="31"/>
    </location>
</feature>
<feature type="helix" evidence="7">
    <location>
        <begin position="35"/>
        <end position="38"/>
    </location>
</feature>
<feature type="strand" evidence="7">
    <location>
        <begin position="47"/>
        <end position="61"/>
    </location>
</feature>
<feature type="helix" evidence="7">
    <location>
        <begin position="62"/>
        <end position="64"/>
    </location>
</feature>
<feature type="strand" evidence="7">
    <location>
        <begin position="66"/>
        <end position="69"/>
    </location>
</feature>
<feature type="helix" evidence="7">
    <location>
        <begin position="74"/>
        <end position="80"/>
    </location>
</feature>
<feature type="helix" evidence="7">
    <location>
        <begin position="83"/>
        <end position="92"/>
    </location>
</feature>
<feature type="helix" evidence="7">
    <location>
        <begin position="98"/>
        <end position="110"/>
    </location>
</feature>
<feature type="helix" evidence="7">
    <location>
        <begin position="116"/>
        <end position="122"/>
    </location>
</feature>
<feature type="helix" evidence="7">
    <location>
        <begin position="131"/>
        <end position="139"/>
    </location>
</feature>
<feature type="helix" evidence="7">
    <location>
        <begin position="140"/>
        <end position="144"/>
    </location>
</feature>
<feature type="helix" evidence="7">
    <location>
        <begin position="147"/>
        <end position="149"/>
    </location>
</feature>
<feature type="strand" evidence="8">
    <location>
        <begin position="152"/>
        <end position="154"/>
    </location>
</feature>
<feature type="helix" evidence="7">
    <location>
        <begin position="155"/>
        <end position="181"/>
    </location>
</feature>
<feature type="strand" evidence="8">
    <location>
        <begin position="190"/>
        <end position="192"/>
    </location>
</feature>
<feature type="helix" evidence="7">
    <location>
        <begin position="194"/>
        <end position="203"/>
    </location>
</feature>
<feature type="strand" evidence="5">
    <location>
        <begin position="206"/>
        <end position="208"/>
    </location>
</feature>
<feature type="helix" evidence="7">
    <location>
        <begin position="214"/>
        <end position="225"/>
    </location>
</feature>
<feature type="helix" evidence="7">
    <location>
        <begin position="234"/>
        <end position="244"/>
    </location>
</feature>
<feature type="helix" evidence="7">
    <location>
        <begin position="249"/>
        <end position="261"/>
    </location>
</feature>
<feature type="turn" evidence="7">
    <location>
        <begin position="262"/>
        <end position="265"/>
    </location>
</feature>
<feature type="helix" evidence="7">
    <location>
        <begin position="268"/>
        <end position="278"/>
    </location>
</feature>
<feature type="strand" evidence="7">
    <location>
        <begin position="281"/>
        <end position="284"/>
    </location>
</feature>
<feature type="turn" evidence="7">
    <location>
        <begin position="285"/>
        <end position="288"/>
    </location>
</feature>
<feature type="helix" evidence="7">
    <location>
        <begin position="290"/>
        <end position="292"/>
    </location>
</feature>
<feature type="helix" evidence="7">
    <location>
        <begin position="300"/>
        <end position="302"/>
    </location>
</feature>
<feature type="helix" evidence="7">
    <location>
        <begin position="316"/>
        <end position="329"/>
    </location>
</feature>
<feature type="helix" evidence="5">
    <location>
        <begin position="331"/>
        <end position="333"/>
    </location>
</feature>
<feature type="turn" evidence="6">
    <location>
        <begin position="335"/>
        <end position="338"/>
    </location>
</feature>
<feature type="helix" evidence="7">
    <location>
        <begin position="339"/>
        <end position="349"/>
    </location>
</feature>
<feature type="helix" evidence="7">
    <location>
        <begin position="351"/>
        <end position="356"/>
    </location>
</feature>
<feature type="helix" evidence="7">
    <location>
        <begin position="362"/>
        <end position="372"/>
    </location>
</feature>
<feature type="helix" evidence="7">
    <location>
        <begin position="379"/>
        <end position="403"/>
    </location>
</feature>
<feature type="strand" evidence="7">
    <location>
        <begin position="410"/>
        <end position="413"/>
    </location>
</feature>
<dbReference type="EC" id="2.3.3.16"/>
<dbReference type="EMBL" id="J01619">
    <property type="protein sequence ID" value="AAA23892.1"/>
    <property type="molecule type" value="Genomic_DNA"/>
</dbReference>
<dbReference type="EMBL" id="U00096">
    <property type="protein sequence ID" value="AAC73814.1"/>
    <property type="molecule type" value="Genomic_DNA"/>
</dbReference>
<dbReference type="EMBL" id="AP009048">
    <property type="protein sequence ID" value="BAA35384.2"/>
    <property type="molecule type" value="Genomic_DNA"/>
</dbReference>
<dbReference type="EMBL" id="X00980">
    <property type="protein sequence ID" value="CAA25484.1"/>
    <property type="molecule type" value="Genomic_DNA"/>
</dbReference>
<dbReference type="EMBL" id="V01501">
    <property type="protein sequence ID" value="CAA24746.1"/>
    <property type="molecule type" value="Genomic_DNA"/>
</dbReference>
<dbReference type="EMBL" id="M28987">
    <property type="protein sequence ID" value="AAA23901.1"/>
    <property type="molecule type" value="Genomic_DNA"/>
</dbReference>
<dbReference type="EMBL" id="M29373">
    <property type="protein sequence ID" value="AAA23902.1"/>
    <property type="molecule type" value="Genomic_DNA"/>
</dbReference>
<dbReference type="PIR" id="G64807">
    <property type="entry name" value="YKEC"/>
</dbReference>
<dbReference type="RefSeq" id="NP_415248.1">
    <property type="nucleotide sequence ID" value="NC_000913.3"/>
</dbReference>
<dbReference type="RefSeq" id="WP_000785834.1">
    <property type="nucleotide sequence ID" value="NZ_STEB01000035.1"/>
</dbReference>
<dbReference type="PDB" id="1NXE">
    <property type="method" value="X-ray"/>
    <property type="resolution" value="2.30 A"/>
    <property type="chains" value="A/B=1-427"/>
</dbReference>
<dbReference type="PDB" id="1NXG">
    <property type="method" value="X-ray"/>
    <property type="resolution" value="2.50 A"/>
    <property type="chains" value="A/B=1-427"/>
</dbReference>
<dbReference type="PDB" id="1OWB">
    <property type="method" value="X-ray"/>
    <property type="resolution" value="2.20 A"/>
    <property type="chains" value="A/B=1-427"/>
</dbReference>
<dbReference type="PDB" id="1OWC">
    <property type="method" value="X-ray"/>
    <property type="resolution" value="2.20 A"/>
    <property type="chains" value="A/B=1-427"/>
</dbReference>
<dbReference type="PDB" id="4G6B">
    <property type="method" value="X-ray"/>
    <property type="resolution" value="2.20 A"/>
    <property type="chains" value="A/B=2-427"/>
</dbReference>
<dbReference type="PDB" id="4JAD">
    <property type="method" value="X-ray"/>
    <property type="resolution" value="1.90 A"/>
    <property type="chains" value="A/B=2-427"/>
</dbReference>
<dbReference type="PDB" id="4JAE">
    <property type="method" value="X-ray"/>
    <property type="resolution" value="2.70 A"/>
    <property type="chains" value="A/B=2-427"/>
</dbReference>
<dbReference type="PDB" id="4JAF">
    <property type="method" value="X-ray"/>
    <property type="resolution" value="2.30 A"/>
    <property type="chains" value="A/B=2-427"/>
</dbReference>
<dbReference type="PDB" id="4JAG">
    <property type="method" value="X-ray"/>
    <property type="resolution" value="2.10 A"/>
    <property type="chains" value="A/B=2-427"/>
</dbReference>
<dbReference type="PDBsum" id="1NXE"/>
<dbReference type="PDBsum" id="1NXG"/>
<dbReference type="PDBsum" id="1OWB"/>
<dbReference type="PDBsum" id="1OWC"/>
<dbReference type="PDBsum" id="4G6B"/>
<dbReference type="PDBsum" id="4JAD"/>
<dbReference type="PDBsum" id="4JAE"/>
<dbReference type="PDBsum" id="4JAF"/>
<dbReference type="PDBsum" id="4JAG"/>
<dbReference type="SMR" id="P0ABH7"/>
<dbReference type="BioGRID" id="4259941">
    <property type="interactions" value="14"/>
</dbReference>
<dbReference type="BioGRID" id="849699">
    <property type="interactions" value="2"/>
</dbReference>
<dbReference type="DIP" id="DIP-36204N"/>
<dbReference type="FunCoup" id="P0ABH7">
    <property type="interactions" value="771"/>
</dbReference>
<dbReference type="IntAct" id="P0ABH7">
    <property type="interactions" value="11"/>
</dbReference>
<dbReference type="STRING" id="511145.b0720"/>
<dbReference type="iPTMnet" id="P0ABH7"/>
<dbReference type="jPOST" id="P0ABH7"/>
<dbReference type="PaxDb" id="511145-b0720"/>
<dbReference type="EnsemblBacteria" id="AAC73814">
    <property type="protein sequence ID" value="AAC73814"/>
    <property type="gene ID" value="b0720"/>
</dbReference>
<dbReference type="GeneID" id="93776765"/>
<dbReference type="GeneID" id="945323"/>
<dbReference type="KEGG" id="ecj:JW0710"/>
<dbReference type="KEGG" id="eco:b0720"/>
<dbReference type="KEGG" id="ecoc:C3026_03600"/>
<dbReference type="PATRIC" id="fig|1411691.4.peg.1553"/>
<dbReference type="EchoBASE" id="EB0397"/>
<dbReference type="eggNOG" id="COG0372">
    <property type="taxonomic scope" value="Bacteria"/>
</dbReference>
<dbReference type="InParanoid" id="P0ABH7"/>
<dbReference type="OMA" id="VLEWLFK"/>
<dbReference type="OrthoDB" id="9800864at2"/>
<dbReference type="PhylomeDB" id="P0ABH7"/>
<dbReference type="BioCyc" id="EcoCyc:CITSYN-MONOMER"/>
<dbReference type="BioCyc" id="MetaCyc:CITSYN-MONOMER"/>
<dbReference type="BRENDA" id="2.3.3.16">
    <property type="organism ID" value="2026"/>
</dbReference>
<dbReference type="SABIO-RK" id="P0ABH7"/>
<dbReference type="UniPathway" id="UPA00223">
    <property type="reaction ID" value="UER00717"/>
</dbReference>
<dbReference type="EvolutionaryTrace" id="P0ABH7"/>
<dbReference type="PRO" id="PR:P0ABH7"/>
<dbReference type="Proteomes" id="UP000000625">
    <property type="component" value="Chromosome"/>
</dbReference>
<dbReference type="GO" id="GO:0005829">
    <property type="term" value="C:cytosol"/>
    <property type="evidence" value="ECO:0000314"/>
    <property type="project" value="EcoCyc"/>
</dbReference>
<dbReference type="GO" id="GO:0004108">
    <property type="term" value="F:citrate (Si)-synthase activity"/>
    <property type="evidence" value="ECO:0000314"/>
    <property type="project" value="EcoCyc"/>
</dbReference>
<dbReference type="GO" id="GO:0042802">
    <property type="term" value="F:identical protein binding"/>
    <property type="evidence" value="ECO:0000314"/>
    <property type="project" value="EcoCyc"/>
</dbReference>
<dbReference type="GO" id="GO:0070404">
    <property type="term" value="F:NADH binding"/>
    <property type="evidence" value="ECO:0000314"/>
    <property type="project" value="EcoCyc"/>
</dbReference>
<dbReference type="GO" id="GO:0034214">
    <property type="term" value="P:protein hexamerization"/>
    <property type="evidence" value="ECO:0000314"/>
    <property type="project" value="EcoCyc"/>
</dbReference>
<dbReference type="GO" id="GO:0006099">
    <property type="term" value="P:tricarboxylic acid cycle"/>
    <property type="evidence" value="ECO:0007669"/>
    <property type="project" value="UniProtKB-UniPathway"/>
</dbReference>
<dbReference type="CDD" id="cd06114">
    <property type="entry name" value="EcCS_like"/>
    <property type="match status" value="1"/>
</dbReference>
<dbReference type="FunFam" id="1.10.230.10:FF:000002">
    <property type="entry name" value="Citrate synthase"/>
    <property type="match status" value="1"/>
</dbReference>
<dbReference type="FunFam" id="1.10.580.10:FF:000002">
    <property type="entry name" value="Citrate synthase"/>
    <property type="match status" value="1"/>
</dbReference>
<dbReference type="FunFam" id="2.20.28.60:FF:000001">
    <property type="entry name" value="Citrate synthase"/>
    <property type="match status" value="1"/>
</dbReference>
<dbReference type="Gene3D" id="2.20.28.60">
    <property type="match status" value="1"/>
</dbReference>
<dbReference type="Gene3D" id="1.10.580.10">
    <property type="entry name" value="Citrate Synthase, domain 1"/>
    <property type="match status" value="1"/>
</dbReference>
<dbReference type="Gene3D" id="1.10.230.10">
    <property type="entry name" value="Cytochrome P450-Terp, domain 2"/>
    <property type="match status" value="1"/>
</dbReference>
<dbReference type="InterPro" id="IPR016142">
    <property type="entry name" value="Citrate_synth-like_lrg_a-sub"/>
</dbReference>
<dbReference type="InterPro" id="IPR016143">
    <property type="entry name" value="Citrate_synth-like_sm_a-sub"/>
</dbReference>
<dbReference type="InterPro" id="IPR002020">
    <property type="entry name" value="Citrate_synthase"/>
</dbReference>
<dbReference type="InterPro" id="IPR019810">
    <property type="entry name" value="Citrate_synthase_AS"/>
</dbReference>
<dbReference type="InterPro" id="IPR024176">
    <property type="entry name" value="Citrate_synthase_bac-typ"/>
</dbReference>
<dbReference type="InterPro" id="IPR036969">
    <property type="entry name" value="Citrate_synthase_sf"/>
</dbReference>
<dbReference type="InterPro" id="IPR010953">
    <property type="entry name" value="Citrate_synthase_typ-I"/>
</dbReference>
<dbReference type="NCBIfam" id="TIGR01798">
    <property type="entry name" value="cit_synth_I"/>
    <property type="match status" value="1"/>
</dbReference>
<dbReference type="NCBIfam" id="NF004126">
    <property type="entry name" value="PRK05614.1"/>
    <property type="match status" value="1"/>
</dbReference>
<dbReference type="PANTHER" id="PTHR42871">
    <property type="entry name" value="CITRATE SYNTHASE"/>
    <property type="match status" value="1"/>
</dbReference>
<dbReference type="PANTHER" id="PTHR42871:SF1">
    <property type="entry name" value="CITRATE SYNTHASE"/>
    <property type="match status" value="1"/>
</dbReference>
<dbReference type="Pfam" id="PF00285">
    <property type="entry name" value="Citrate_synt"/>
    <property type="match status" value="1"/>
</dbReference>
<dbReference type="PIRSF" id="PIRSF001369">
    <property type="entry name" value="Citrate_synth"/>
    <property type="match status" value="1"/>
</dbReference>
<dbReference type="PRINTS" id="PR00143">
    <property type="entry name" value="CITRTSNTHASE"/>
</dbReference>
<dbReference type="SUPFAM" id="SSF48256">
    <property type="entry name" value="Citrate synthase"/>
    <property type="match status" value="1"/>
</dbReference>
<dbReference type="PROSITE" id="PS00480">
    <property type="entry name" value="CITRATE_SYNTHASE"/>
    <property type="match status" value="1"/>
</dbReference>
<organism>
    <name type="scientific">Escherichia coli (strain K12)</name>
    <dbReference type="NCBI Taxonomy" id="83333"/>
    <lineage>
        <taxon>Bacteria</taxon>
        <taxon>Pseudomonadati</taxon>
        <taxon>Pseudomonadota</taxon>
        <taxon>Gammaproteobacteria</taxon>
        <taxon>Enterobacterales</taxon>
        <taxon>Enterobacteriaceae</taxon>
        <taxon>Escherichia</taxon>
    </lineage>
</organism>
<keyword id="KW-0002">3D-structure</keyword>
<keyword id="KW-0007">Acetylation</keyword>
<keyword id="KW-0021">Allosteric enzyme</keyword>
<keyword id="KW-0903">Direct protein sequencing</keyword>
<keyword id="KW-1185">Reference proteome</keyword>
<keyword id="KW-0808">Transferase</keyword>
<keyword id="KW-0816">Tricarboxylic acid cycle</keyword>
<proteinExistence type="evidence at protein level"/>
<evidence type="ECO:0000255" key="1">
    <source>
        <dbReference type="PROSITE-ProRule" id="PRU10117"/>
    </source>
</evidence>
<evidence type="ECO:0000269" key="2">
    <source>
    </source>
</evidence>
<evidence type="ECO:0000269" key="3">
    <source>
    </source>
</evidence>
<evidence type="ECO:0000305" key="4"/>
<evidence type="ECO:0007829" key="5">
    <source>
        <dbReference type="PDB" id="1OWB"/>
    </source>
</evidence>
<evidence type="ECO:0007829" key="6">
    <source>
        <dbReference type="PDB" id="4G6B"/>
    </source>
</evidence>
<evidence type="ECO:0007829" key="7">
    <source>
        <dbReference type="PDB" id="4JAD"/>
    </source>
</evidence>
<evidence type="ECO:0007829" key="8">
    <source>
        <dbReference type="PDB" id="4JAE"/>
    </source>
</evidence>